<gene>
    <name type="primary">RXFP4</name>
    <name type="synonym">GPCR142</name>
    <name type="synonym">GPR100</name>
    <name type="synonym">RLN3R2</name>
</gene>
<reference key="1">
    <citation type="journal article" date="2003" name="J. Biol. Chem.">
        <title>Identification of relaxin-3/INSL7 as a ligand for GPCR142.</title>
        <authorList>
            <person name="Liu C."/>
            <person name="Chen J."/>
            <person name="Sutton S."/>
            <person name="Roland B."/>
            <person name="Kuei C."/>
            <person name="Farmer N."/>
            <person name="Sillard R."/>
            <person name="Lovenberg T.W."/>
        </authorList>
    </citation>
    <scope>NUCLEOTIDE SEQUENCE [MRNA]</scope>
    <scope>VARIANT SER-329</scope>
    <scope>FUNCTION AS A RECEPTOR FOR RLN3</scope>
</reference>
<reference key="2">
    <citation type="journal article" date="2003" name="FEBS Lett.">
        <title>Seven evolutionarily conserved human rhodopsin G protein-coupled receptors lacking close relatives.</title>
        <authorList>
            <person name="Fredriksson R."/>
            <person name="Hoeglund P.J."/>
            <person name="Gloriam D.E.I."/>
            <person name="Lagerstroem M.C."/>
            <person name="Schioeth H.B."/>
        </authorList>
    </citation>
    <scope>NUCLEOTIDE SEQUENCE [MRNA]</scope>
</reference>
<reference key="3">
    <citation type="journal article" date="2003" name="Br. J. Pharmacol.">
        <title>Identification and characterisation of GPR100 as a novel human G-protein-coupled bradykinin receptor.</title>
        <authorList>
            <person name="Boels K."/>
            <person name="Schaller H.C."/>
        </authorList>
    </citation>
    <scope>NUCLEOTIDE SEQUENCE [MRNA]</scope>
    <scope>TISSUE SPECIFICITY</scope>
    <scope>INTERACTION WITH BRADYKININ AND KALLIDIN</scope>
    <source>
        <tissue>Pancreatic carcinoma</tissue>
    </source>
</reference>
<reference key="4">
    <citation type="submission" date="2001-07" db="EMBL/GenBank/DDBJ databases">
        <title>Genome-wide discovery and analysis of human seven transmembrane helix receptor genes.</title>
        <authorList>
            <person name="Suwa M."/>
            <person name="Sato T."/>
            <person name="Okouchi I."/>
            <person name="Arita M."/>
            <person name="Futami K."/>
            <person name="Matsumoto S."/>
            <person name="Tsutsumi S."/>
            <person name="Aburatani H."/>
            <person name="Asai K."/>
            <person name="Akiyama Y."/>
        </authorList>
    </citation>
    <scope>NUCLEOTIDE SEQUENCE [GENOMIC DNA]</scope>
</reference>
<reference key="5">
    <citation type="journal article" date="2002" name="FEBS Lett.">
        <title>Identification of G protein-coupled receptor genes from the human genome sequence.</title>
        <authorList>
            <person name="Takeda S."/>
            <person name="Kadowaki S."/>
            <person name="Haga T."/>
            <person name="Takaesu H."/>
            <person name="Mitaku S."/>
        </authorList>
    </citation>
    <scope>NUCLEOTIDE SEQUENCE [LARGE SCALE GENOMIC DNA]</scope>
</reference>
<reference key="6">
    <citation type="journal article" date="2006" name="Nature">
        <title>The DNA sequence and biological annotation of human chromosome 1.</title>
        <authorList>
            <person name="Gregory S.G."/>
            <person name="Barlow K.F."/>
            <person name="McLay K.E."/>
            <person name="Kaul R."/>
            <person name="Swarbreck D."/>
            <person name="Dunham A."/>
            <person name="Scott C.E."/>
            <person name="Howe K.L."/>
            <person name="Woodfine K."/>
            <person name="Spencer C.C.A."/>
            <person name="Jones M.C."/>
            <person name="Gillson C."/>
            <person name="Searle S."/>
            <person name="Zhou Y."/>
            <person name="Kokocinski F."/>
            <person name="McDonald L."/>
            <person name="Evans R."/>
            <person name="Phillips K."/>
            <person name="Atkinson A."/>
            <person name="Cooper R."/>
            <person name="Jones C."/>
            <person name="Hall R.E."/>
            <person name="Andrews T.D."/>
            <person name="Lloyd C."/>
            <person name="Ainscough R."/>
            <person name="Almeida J.P."/>
            <person name="Ambrose K.D."/>
            <person name="Anderson F."/>
            <person name="Andrew R.W."/>
            <person name="Ashwell R.I.S."/>
            <person name="Aubin K."/>
            <person name="Babbage A.K."/>
            <person name="Bagguley C.L."/>
            <person name="Bailey J."/>
            <person name="Beasley H."/>
            <person name="Bethel G."/>
            <person name="Bird C.P."/>
            <person name="Bray-Allen S."/>
            <person name="Brown J.Y."/>
            <person name="Brown A.J."/>
            <person name="Buckley D."/>
            <person name="Burton J."/>
            <person name="Bye J."/>
            <person name="Carder C."/>
            <person name="Chapman J.C."/>
            <person name="Clark S.Y."/>
            <person name="Clarke G."/>
            <person name="Clee C."/>
            <person name="Cobley V."/>
            <person name="Collier R.E."/>
            <person name="Corby N."/>
            <person name="Coville G.J."/>
            <person name="Davies J."/>
            <person name="Deadman R."/>
            <person name="Dunn M."/>
            <person name="Earthrowl M."/>
            <person name="Ellington A.G."/>
            <person name="Errington H."/>
            <person name="Frankish A."/>
            <person name="Frankland J."/>
            <person name="French L."/>
            <person name="Garner P."/>
            <person name="Garnett J."/>
            <person name="Gay L."/>
            <person name="Ghori M.R.J."/>
            <person name="Gibson R."/>
            <person name="Gilby L.M."/>
            <person name="Gillett W."/>
            <person name="Glithero R.J."/>
            <person name="Grafham D.V."/>
            <person name="Griffiths C."/>
            <person name="Griffiths-Jones S."/>
            <person name="Grocock R."/>
            <person name="Hammond S."/>
            <person name="Harrison E.S.I."/>
            <person name="Hart E."/>
            <person name="Haugen E."/>
            <person name="Heath P.D."/>
            <person name="Holmes S."/>
            <person name="Holt K."/>
            <person name="Howden P.J."/>
            <person name="Hunt A.R."/>
            <person name="Hunt S.E."/>
            <person name="Hunter G."/>
            <person name="Isherwood J."/>
            <person name="James R."/>
            <person name="Johnson C."/>
            <person name="Johnson D."/>
            <person name="Joy A."/>
            <person name="Kay M."/>
            <person name="Kershaw J.K."/>
            <person name="Kibukawa M."/>
            <person name="Kimberley A.M."/>
            <person name="King A."/>
            <person name="Knights A.J."/>
            <person name="Lad H."/>
            <person name="Laird G."/>
            <person name="Lawlor S."/>
            <person name="Leongamornlert D.A."/>
            <person name="Lloyd D.M."/>
            <person name="Loveland J."/>
            <person name="Lovell J."/>
            <person name="Lush M.J."/>
            <person name="Lyne R."/>
            <person name="Martin S."/>
            <person name="Mashreghi-Mohammadi M."/>
            <person name="Matthews L."/>
            <person name="Matthews N.S.W."/>
            <person name="McLaren S."/>
            <person name="Milne S."/>
            <person name="Mistry S."/>
            <person name="Moore M.J.F."/>
            <person name="Nickerson T."/>
            <person name="O'Dell C.N."/>
            <person name="Oliver K."/>
            <person name="Palmeiri A."/>
            <person name="Palmer S.A."/>
            <person name="Parker A."/>
            <person name="Patel D."/>
            <person name="Pearce A.V."/>
            <person name="Peck A.I."/>
            <person name="Pelan S."/>
            <person name="Phelps K."/>
            <person name="Phillimore B.J."/>
            <person name="Plumb R."/>
            <person name="Rajan J."/>
            <person name="Raymond C."/>
            <person name="Rouse G."/>
            <person name="Saenphimmachak C."/>
            <person name="Sehra H.K."/>
            <person name="Sheridan E."/>
            <person name="Shownkeen R."/>
            <person name="Sims S."/>
            <person name="Skuce C.D."/>
            <person name="Smith M."/>
            <person name="Steward C."/>
            <person name="Subramanian S."/>
            <person name="Sycamore N."/>
            <person name="Tracey A."/>
            <person name="Tromans A."/>
            <person name="Van Helmond Z."/>
            <person name="Wall M."/>
            <person name="Wallis J.M."/>
            <person name="White S."/>
            <person name="Whitehead S.L."/>
            <person name="Wilkinson J.E."/>
            <person name="Willey D.L."/>
            <person name="Williams H."/>
            <person name="Wilming L."/>
            <person name="Wray P.W."/>
            <person name="Wu Z."/>
            <person name="Coulson A."/>
            <person name="Vaudin M."/>
            <person name="Sulston J.E."/>
            <person name="Durbin R.M."/>
            <person name="Hubbard T."/>
            <person name="Wooster R."/>
            <person name="Dunham I."/>
            <person name="Carter N.P."/>
            <person name="McVean G."/>
            <person name="Ross M.T."/>
            <person name="Harrow J."/>
            <person name="Olson M.V."/>
            <person name="Beck S."/>
            <person name="Rogers J."/>
            <person name="Bentley D.R."/>
        </authorList>
    </citation>
    <scope>NUCLEOTIDE SEQUENCE [LARGE SCALE GENOMIC DNA]</scope>
</reference>
<reference key="7">
    <citation type="submission" date="2007-12" db="EMBL/GenBank/DDBJ databases">
        <authorList>
            <person name="Kaighin V.A."/>
            <person name="Martin A.L."/>
            <person name="Aronstam R.S."/>
        </authorList>
    </citation>
    <scope>NUCLEOTIDE SEQUENCE [MRNA]</scope>
    <scope>VARIANT SER-329</scope>
    <source>
        <tissue>Testis</tissue>
    </source>
</reference>
<reference key="8">
    <citation type="journal article" date="2004" name="Genome Res.">
        <title>The status, quality, and expansion of the NIH full-length cDNA project: the Mammalian Gene Collection (MGC).</title>
        <authorList>
            <consortium name="The MGC Project Team"/>
        </authorList>
    </citation>
    <scope>NUCLEOTIDE SEQUENCE [LARGE SCALE MRNA]</scope>
    <scope>VARIANT SER-329</scope>
    <source>
        <tissue>Brain</tissue>
    </source>
</reference>
<reference key="9">
    <citation type="journal article" date="2005" name="J. Biol. Chem.">
        <title>INSL5 is a high affinity specific agonist for GPCR142 (GPR100).</title>
        <authorList>
            <person name="Liu C."/>
            <person name="Kuei C."/>
            <person name="Sutton S."/>
            <person name="Chen J."/>
            <person name="Bonaventure P."/>
            <person name="Wu J."/>
            <person name="Nepomuceno D."/>
            <person name="Kamme F."/>
            <person name="Tran D.T."/>
            <person name="Zhu J."/>
            <person name="Wilkinson T."/>
            <person name="Bathgate R."/>
            <person name="Eriste E."/>
            <person name="Sillard R."/>
            <person name="Lovenberg T.W."/>
        </authorList>
    </citation>
    <scope>FUNCTION AS A RECEPTOR FOR INSL5</scope>
</reference>
<name>RL3R2_HUMAN</name>
<accession>Q8TDU9</accession>
<accession>B0M0L4</accession>
<accession>Q3MJB1</accession>
<accession>Q8NGZ8</accession>
<protein>
    <recommendedName>
        <fullName>Relaxin-3 receptor 2</fullName>
        <shortName>RLN3 receptor 2</shortName>
    </recommendedName>
    <alternativeName>
        <fullName>G-protein coupled receptor 100</fullName>
    </alternativeName>
    <alternativeName>
        <fullName>G-protein coupled receptor GPCR142</fullName>
    </alternativeName>
    <alternativeName>
        <fullName>Insulin-like peptide INSL5 receptor</fullName>
    </alternativeName>
    <alternativeName>
        <fullName>Relaxin family peptide receptor 4</fullName>
    </alternativeName>
</protein>
<dbReference type="EMBL" id="AY394502">
    <property type="protein sequence ID" value="AAQ92316.1"/>
    <property type="molecule type" value="mRNA"/>
</dbReference>
<dbReference type="EMBL" id="AY288415">
    <property type="protein sequence ID" value="AAP72124.1"/>
    <property type="molecule type" value="mRNA"/>
</dbReference>
<dbReference type="EMBL" id="AY170824">
    <property type="protein sequence ID" value="AAO17676.1"/>
    <property type="molecule type" value="mRNA"/>
</dbReference>
<dbReference type="EMBL" id="AB065617">
    <property type="protein sequence ID" value="BAC05844.1"/>
    <property type="status" value="ALT_SEQ"/>
    <property type="molecule type" value="Genomic_DNA"/>
</dbReference>
<dbReference type="EMBL" id="AB083593">
    <property type="protein sequence ID" value="BAB89306.1"/>
    <property type="molecule type" value="Genomic_DNA"/>
</dbReference>
<dbReference type="EMBL" id="AL355388">
    <property type="status" value="NOT_ANNOTATED_CDS"/>
    <property type="molecule type" value="Genomic_DNA"/>
</dbReference>
<dbReference type="EMBL" id="EU432129">
    <property type="protein sequence ID" value="ABY87928.1"/>
    <property type="molecule type" value="mRNA"/>
</dbReference>
<dbReference type="EMBL" id="BC101507">
    <property type="protein sequence ID" value="AAI01508.1"/>
    <property type="molecule type" value="mRNA"/>
</dbReference>
<dbReference type="EMBL" id="BC101509">
    <property type="protein sequence ID" value="AAI01510.1"/>
    <property type="molecule type" value="mRNA"/>
</dbReference>
<dbReference type="CCDS" id="CCDS1124.1"/>
<dbReference type="RefSeq" id="NP_871001.1">
    <property type="nucleotide sequence ID" value="NM_181885.3"/>
</dbReference>
<dbReference type="PDB" id="7YJ4">
    <property type="method" value="EM"/>
    <property type="resolution" value="3.19 A"/>
    <property type="chains" value="R=1-374"/>
</dbReference>
<dbReference type="PDB" id="7YK6">
    <property type="method" value="EM"/>
    <property type="resolution" value="3.03 A"/>
    <property type="chains" value="R=1-374"/>
</dbReference>
<dbReference type="PDB" id="7YK7">
    <property type="method" value="EM"/>
    <property type="resolution" value="2.75 A"/>
    <property type="chains" value="R=1-374"/>
</dbReference>
<dbReference type="PDBsum" id="7YJ4"/>
<dbReference type="PDBsum" id="7YK6"/>
<dbReference type="PDBsum" id="7YK7"/>
<dbReference type="EMDB" id="EMD-33871"/>
<dbReference type="EMDB" id="EMD-33888"/>
<dbReference type="EMDB" id="EMD-33889"/>
<dbReference type="SMR" id="Q8TDU9"/>
<dbReference type="BioGRID" id="130880">
    <property type="interactions" value="59"/>
</dbReference>
<dbReference type="FunCoup" id="Q8TDU9">
    <property type="interactions" value="867"/>
</dbReference>
<dbReference type="IntAct" id="Q8TDU9">
    <property type="interactions" value="11"/>
</dbReference>
<dbReference type="MINT" id="Q8TDU9"/>
<dbReference type="STRING" id="9606.ENSP00000357301"/>
<dbReference type="BindingDB" id="Q8TDU9"/>
<dbReference type="ChEMBL" id="CHEMBL1628473"/>
<dbReference type="GuidetoPHARMACOLOGY" id="354"/>
<dbReference type="GlyCosmos" id="Q8TDU9">
    <property type="glycosylation" value="2 sites, No reported glycans"/>
</dbReference>
<dbReference type="GlyGen" id="Q8TDU9">
    <property type="glycosylation" value="2 sites"/>
</dbReference>
<dbReference type="iPTMnet" id="Q8TDU9"/>
<dbReference type="PhosphoSitePlus" id="Q8TDU9"/>
<dbReference type="BioMuta" id="RXFP4"/>
<dbReference type="DMDM" id="38258194"/>
<dbReference type="PaxDb" id="9606-ENSP00000357301"/>
<dbReference type="ProteomicsDB" id="74341"/>
<dbReference type="Antibodypedia" id="20424">
    <property type="antibodies" value="161 antibodies from 25 providers"/>
</dbReference>
<dbReference type="DNASU" id="339403"/>
<dbReference type="Ensembl" id="ENST00000368318.5">
    <property type="protein sequence ID" value="ENSP00000357301.4"/>
    <property type="gene ID" value="ENSG00000173080.6"/>
</dbReference>
<dbReference type="GeneID" id="339403"/>
<dbReference type="KEGG" id="hsa:339403"/>
<dbReference type="MANE-Select" id="ENST00000368318.5">
    <property type="protein sequence ID" value="ENSP00000357301.4"/>
    <property type="RefSeq nucleotide sequence ID" value="NM_181885.3"/>
    <property type="RefSeq protein sequence ID" value="NP_871001.1"/>
</dbReference>
<dbReference type="UCSC" id="uc010pgs.3">
    <property type="organism name" value="human"/>
</dbReference>
<dbReference type="AGR" id="HGNC:14666"/>
<dbReference type="CTD" id="339403"/>
<dbReference type="DisGeNET" id="339403"/>
<dbReference type="GeneCards" id="RXFP4"/>
<dbReference type="HGNC" id="HGNC:14666">
    <property type="gene designation" value="RXFP4"/>
</dbReference>
<dbReference type="HPA" id="ENSG00000173080">
    <property type="expression patterns" value="Tissue enhanced (intestine)"/>
</dbReference>
<dbReference type="MIM" id="609043">
    <property type="type" value="gene"/>
</dbReference>
<dbReference type="neXtProt" id="NX_Q8TDU9"/>
<dbReference type="OpenTargets" id="ENSG00000173080"/>
<dbReference type="PharmGKB" id="PA28848"/>
<dbReference type="VEuPathDB" id="HostDB:ENSG00000173080"/>
<dbReference type="eggNOG" id="KOG3656">
    <property type="taxonomic scope" value="Eukaryota"/>
</dbReference>
<dbReference type="GeneTree" id="ENSGT01130000278308"/>
<dbReference type="HOGENOM" id="CLU_009579_8_1_1"/>
<dbReference type="InParanoid" id="Q8TDU9"/>
<dbReference type="OMA" id="WVLGNCA"/>
<dbReference type="OrthoDB" id="9936726at2759"/>
<dbReference type="PAN-GO" id="Q8TDU9">
    <property type="GO annotations" value="3 GO annotations based on evolutionary models"/>
</dbReference>
<dbReference type="PhylomeDB" id="Q8TDU9"/>
<dbReference type="TreeFam" id="TF330024"/>
<dbReference type="PathwayCommons" id="Q8TDU9"/>
<dbReference type="Reactome" id="R-HSA-418594">
    <property type="pathway name" value="G alpha (i) signalling events"/>
</dbReference>
<dbReference type="Reactome" id="R-HSA-444821">
    <property type="pathway name" value="Relaxin receptors"/>
</dbReference>
<dbReference type="SignaLink" id="Q8TDU9"/>
<dbReference type="BioGRID-ORCS" id="339403">
    <property type="hits" value="25 hits in 1143 CRISPR screens"/>
</dbReference>
<dbReference type="GeneWiki" id="Relaxin/insulin-like_family_peptide_receptor_4"/>
<dbReference type="GenomeRNAi" id="339403"/>
<dbReference type="Pharos" id="Q8TDU9">
    <property type="development level" value="Tchem"/>
</dbReference>
<dbReference type="PRO" id="PR:Q8TDU9"/>
<dbReference type="Proteomes" id="UP000005640">
    <property type="component" value="Chromosome 1"/>
</dbReference>
<dbReference type="RNAct" id="Q8TDU9">
    <property type="molecule type" value="protein"/>
</dbReference>
<dbReference type="Bgee" id="ENSG00000173080">
    <property type="expression patterns" value="Expressed in mucosa of transverse colon and 33 other cell types or tissues"/>
</dbReference>
<dbReference type="GO" id="GO:0005886">
    <property type="term" value="C:plasma membrane"/>
    <property type="evidence" value="ECO:0000318"/>
    <property type="project" value="GO_Central"/>
</dbReference>
<dbReference type="GO" id="GO:0008528">
    <property type="term" value="F:G protein-coupled peptide receptor activity"/>
    <property type="evidence" value="ECO:0000318"/>
    <property type="project" value="GO_Central"/>
</dbReference>
<dbReference type="GO" id="GO:0007218">
    <property type="term" value="P:neuropeptide signaling pathway"/>
    <property type="evidence" value="ECO:0000318"/>
    <property type="project" value="GO_Central"/>
</dbReference>
<dbReference type="GO" id="GO:2000253">
    <property type="term" value="P:positive regulation of feeding behavior"/>
    <property type="evidence" value="ECO:0007669"/>
    <property type="project" value="Ensembl"/>
</dbReference>
<dbReference type="FunFam" id="1.20.1070.10:FF:000273">
    <property type="entry name" value="Relaxin family peptide/INSL5 receptor 4"/>
    <property type="match status" value="1"/>
</dbReference>
<dbReference type="Gene3D" id="1.20.1070.10">
    <property type="entry name" value="Rhodopsin 7-helix transmembrane proteins"/>
    <property type="match status" value="1"/>
</dbReference>
<dbReference type="InterPro" id="IPR000248">
    <property type="entry name" value="ATII_rcpt"/>
</dbReference>
<dbReference type="InterPro" id="IPR050119">
    <property type="entry name" value="CCR1-9-like"/>
</dbReference>
<dbReference type="InterPro" id="IPR000276">
    <property type="entry name" value="GPCR_Rhodpsn"/>
</dbReference>
<dbReference type="InterPro" id="IPR017452">
    <property type="entry name" value="GPCR_Rhodpsn_7TM"/>
</dbReference>
<dbReference type="PANTHER" id="PTHR10489">
    <property type="entry name" value="CELL ADHESION MOLECULE"/>
    <property type="match status" value="1"/>
</dbReference>
<dbReference type="PANTHER" id="PTHR10489:SF951">
    <property type="entry name" value="RELAXIN FAMILY PEPTIDE_INSL5 RECEPTOR 4"/>
    <property type="match status" value="1"/>
</dbReference>
<dbReference type="Pfam" id="PF00001">
    <property type="entry name" value="7tm_1"/>
    <property type="match status" value="1"/>
</dbReference>
<dbReference type="PRINTS" id="PR00241">
    <property type="entry name" value="ANGIOTENSINR"/>
</dbReference>
<dbReference type="PRINTS" id="PR00237">
    <property type="entry name" value="GPCRRHODOPSN"/>
</dbReference>
<dbReference type="SUPFAM" id="SSF81321">
    <property type="entry name" value="Family A G protein-coupled receptor-like"/>
    <property type="match status" value="1"/>
</dbReference>
<dbReference type="PROSITE" id="PS50262">
    <property type="entry name" value="G_PROTEIN_RECEP_F1_2"/>
    <property type="match status" value="1"/>
</dbReference>
<keyword id="KW-0002">3D-structure</keyword>
<keyword id="KW-1003">Cell membrane</keyword>
<keyword id="KW-1015">Disulfide bond</keyword>
<keyword id="KW-0297">G-protein coupled receptor</keyword>
<keyword id="KW-0325">Glycoprotein</keyword>
<keyword id="KW-0472">Membrane</keyword>
<keyword id="KW-0675">Receptor</keyword>
<keyword id="KW-1185">Reference proteome</keyword>
<keyword id="KW-0807">Transducer</keyword>
<keyword id="KW-0812">Transmembrane</keyword>
<keyword id="KW-1133">Transmembrane helix</keyword>
<evidence type="ECO:0000255" key="1"/>
<evidence type="ECO:0000255" key="2">
    <source>
        <dbReference type="PROSITE-ProRule" id="PRU00521"/>
    </source>
</evidence>
<evidence type="ECO:0000269" key="3">
    <source>
    </source>
</evidence>
<evidence type="ECO:0000269" key="4">
    <source>
    </source>
</evidence>
<evidence type="ECO:0000269" key="5">
    <source>
    </source>
</evidence>
<evidence type="ECO:0000269" key="6">
    <source>
    </source>
</evidence>
<evidence type="ECO:0000269" key="7">
    <source ref="7"/>
</evidence>
<evidence type="ECO:0000305" key="8"/>
<evidence type="ECO:0007829" key="9">
    <source>
        <dbReference type="PDB" id="7YK6"/>
    </source>
</evidence>
<evidence type="ECO:0007829" key="10">
    <source>
        <dbReference type="PDB" id="7YK7"/>
    </source>
</evidence>
<proteinExistence type="evidence at protein level"/>
<sequence length="374" mass="41141">MPTLNTSASPPTFFWANASGGSVLSADDAPMPVKFLALRLMVALAYGLVGAIGLLGNLAVLWVLSNCARRAPGPPSDTFVFNLALADLGLALTLPFWAAESALDFHWPFGGALCKMVLTATVLNVYASIFLITALSVARYWVVAMAAGPGTHLSLFWARIATLAVWAAAALVTVPTAVFGVEGEVCGVRLCLLRFPSRYWLGAYQLQRVVLAFMVPLGVITTSYLLLLAFLQRRQRRRQDSRVVARSVRILVASFFLCWFPNHVVTLWGVLVKFDLVPWNSTFYTIQTYVFPVTTCLAHSNSCLNPVLYCLLRREPRQALAGTFRDLRLRLWPQGGGWVQQVALKQVGRRWVASNPRESRPSTLLTNLDRGTPG</sequence>
<organism>
    <name type="scientific">Homo sapiens</name>
    <name type="common">Human</name>
    <dbReference type="NCBI Taxonomy" id="9606"/>
    <lineage>
        <taxon>Eukaryota</taxon>
        <taxon>Metazoa</taxon>
        <taxon>Chordata</taxon>
        <taxon>Craniata</taxon>
        <taxon>Vertebrata</taxon>
        <taxon>Euteleostomi</taxon>
        <taxon>Mammalia</taxon>
        <taxon>Eutheria</taxon>
        <taxon>Euarchontoglires</taxon>
        <taxon>Primates</taxon>
        <taxon>Haplorrhini</taxon>
        <taxon>Catarrhini</taxon>
        <taxon>Hominidae</taxon>
        <taxon>Homo</taxon>
    </lineage>
</organism>
<feature type="chain" id="PRO_0000070106" description="Relaxin-3 receptor 2">
    <location>
        <begin position="1"/>
        <end position="374"/>
    </location>
</feature>
<feature type="topological domain" description="Extracellular" evidence="1">
    <location>
        <begin position="1"/>
        <end position="43"/>
    </location>
</feature>
<feature type="transmembrane region" description="Helical; Name=1" evidence="1">
    <location>
        <begin position="44"/>
        <end position="64"/>
    </location>
</feature>
<feature type="topological domain" description="Cytoplasmic" evidence="1">
    <location>
        <begin position="65"/>
        <end position="78"/>
    </location>
</feature>
<feature type="transmembrane region" description="Helical; Name=2" evidence="1">
    <location>
        <begin position="79"/>
        <end position="99"/>
    </location>
</feature>
<feature type="topological domain" description="Extracellular" evidence="1">
    <location>
        <begin position="100"/>
        <end position="116"/>
    </location>
</feature>
<feature type="transmembrane region" description="Helical; Name=3" evidence="1">
    <location>
        <begin position="117"/>
        <end position="137"/>
    </location>
</feature>
<feature type="topological domain" description="Cytoplasmic" evidence="1">
    <location>
        <begin position="138"/>
        <end position="154"/>
    </location>
</feature>
<feature type="transmembrane region" description="Helical; Name=4" evidence="1">
    <location>
        <begin position="155"/>
        <end position="175"/>
    </location>
</feature>
<feature type="topological domain" description="Extracellular" evidence="1">
    <location>
        <begin position="176"/>
        <end position="209"/>
    </location>
</feature>
<feature type="transmembrane region" description="Helical; Name=5" evidence="1">
    <location>
        <begin position="210"/>
        <end position="230"/>
    </location>
</feature>
<feature type="topological domain" description="Cytoplasmic" evidence="1">
    <location>
        <begin position="231"/>
        <end position="249"/>
    </location>
</feature>
<feature type="transmembrane region" description="Helical; Name=6" evidence="1">
    <location>
        <begin position="250"/>
        <end position="270"/>
    </location>
</feature>
<feature type="topological domain" description="Extracellular" evidence="1">
    <location>
        <begin position="271"/>
        <end position="281"/>
    </location>
</feature>
<feature type="transmembrane region" description="Helical; Name=7" evidence="1">
    <location>
        <begin position="282"/>
        <end position="302"/>
    </location>
</feature>
<feature type="topological domain" description="Cytoplasmic" evidence="1">
    <location>
        <begin position="303"/>
        <end position="374"/>
    </location>
</feature>
<feature type="glycosylation site" description="N-linked (GlcNAc...) asparagine" evidence="1">
    <location>
        <position position="5"/>
    </location>
</feature>
<feature type="glycosylation site" description="N-linked (GlcNAc...) asparagine" evidence="1">
    <location>
        <position position="17"/>
    </location>
</feature>
<feature type="disulfide bond" evidence="2">
    <location>
        <begin position="114"/>
        <end position="191"/>
    </location>
</feature>
<feature type="sequence variant" id="VAR_021516" description="In dbSNP:rs2152051." evidence="3 5 7">
    <original>L</original>
    <variation>S</variation>
    <location>
        <position position="329"/>
    </location>
</feature>
<feature type="helix" evidence="10">
    <location>
        <begin position="38"/>
        <end position="63"/>
    </location>
</feature>
<feature type="helix" evidence="10">
    <location>
        <begin position="75"/>
        <end position="77"/>
    </location>
</feature>
<feature type="helix" evidence="10">
    <location>
        <begin position="78"/>
        <end position="102"/>
    </location>
</feature>
<feature type="helix" evidence="10">
    <location>
        <begin position="111"/>
        <end position="144"/>
    </location>
</feature>
<feature type="helix" evidence="10">
    <location>
        <begin position="155"/>
        <end position="172"/>
    </location>
</feature>
<feature type="helix" evidence="10">
    <location>
        <begin position="175"/>
        <end position="178"/>
    </location>
</feature>
<feature type="strand" evidence="10">
    <location>
        <begin position="183"/>
        <end position="187"/>
    </location>
</feature>
<feature type="helix" evidence="10">
    <location>
        <begin position="200"/>
        <end position="212"/>
    </location>
</feature>
<feature type="helix" evidence="10">
    <location>
        <begin position="214"/>
        <end position="232"/>
    </location>
</feature>
<feature type="strand" evidence="10">
    <location>
        <begin position="234"/>
        <end position="236"/>
    </location>
</feature>
<feature type="helix" evidence="10">
    <location>
        <begin position="238"/>
        <end position="272"/>
    </location>
</feature>
<feature type="turn" evidence="10">
    <location>
        <begin position="280"/>
        <end position="282"/>
    </location>
</feature>
<feature type="helix" evidence="10">
    <location>
        <begin position="284"/>
        <end position="289"/>
    </location>
</feature>
<feature type="helix" evidence="10">
    <location>
        <begin position="291"/>
        <end position="298"/>
    </location>
</feature>
<feature type="helix" evidence="10">
    <location>
        <begin position="301"/>
        <end position="309"/>
    </location>
</feature>
<feature type="turn" evidence="9">
    <location>
        <begin position="310"/>
        <end position="312"/>
    </location>
</feature>
<feature type="helix" evidence="10">
    <location>
        <begin position="314"/>
        <end position="321"/>
    </location>
</feature>
<comment type="function">
    <text evidence="3 6">High affinity receptor for INSL5. Also acts as a receptor for RLN3/relaxin-3, as well as bradykinin and kallidin. Binding of the ligand inhibit cAMP accumulation.</text>
</comment>
<comment type="interaction">
    <interactant intactId="EBI-9519524">
        <id>Q8TDU9</id>
    </interactant>
    <interactant intactId="EBI-17458373">
        <id>P48165</id>
        <label>GJA8</label>
    </interactant>
    <organismsDiffer>false</organismsDiffer>
    <experiments>3</experiments>
</comment>
<comment type="interaction">
    <interactant intactId="EBI-9519524">
        <id>Q8TDU9</id>
    </interactant>
    <interactant intactId="EBI-9519546">
        <id>Q8WXF3</id>
        <label>RLN3</label>
    </interactant>
    <organismsDiffer>false</organismsDiffer>
    <experiments>9</experiments>
</comment>
<comment type="subcellular location">
    <subcellularLocation>
        <location>Cell membrane</location>
        <topology>Multi-pass membrane protein</topology>
    </subcellularLocation>
</comment>
<comment type="tissue specificity">
    <text evidence="4">Expressed in a broader range of tissues including brain, kidney, testis, thymus, placenta, prostate, salivary gland, thyroid and colon.</text>
</comment>
<comment type="similarity">
    <text evidence="2">Belongs to the G-protein coupled receptor 1 family.</text>
</comment>
<comment type="sequence caution" evidence="8">
    <conflict type="erroneous gene model prediction">
        <sequence resource="EMBL-CDS" id="BAC05844"/>
    </conflict>
</comment>